<gene>
    <name evidence="1" type="primary">TRM82</name>
    <name type="ORF">PGUG_04878</name>
</gene>
<name>TRM82_PICGU</name>
<sequence>MKHPFQIIVADTTGRYLFTTVKNVLLVIDLTSGKLVGQWKDELDNSDFLKKKYEEKFDKENDSKRQKSESGQAKVSKIPTPGPGAPPIYNYIRALRLSSDEKYLFATTDSDKAVVIFTIDHSKDNCLELKKRQPFSKRPCALSVDEDRLVVADKFGDVYSIAIEDDQVVNEKELTPILGHVSMLSDVAIVSNDKKKFIITGDRDEHIRISNYPKSFVIKNFLFGHHEFVSCLHVPNFDQSLLISGGGDDYLCLWRWYEGQLVAKIELRELIAPFLTDSHLPPERFLTETSPKEISVARILTFTNKKTGLNILVVLCEQTKAVLLFEIDAKLSVRHLQTISYEDNVLDMCYIEATNTLISAHDSDKNQLFQQQKFDEETNNFTPTTETMDAVAELNPIDVNSRNDFLPLYYINTLRKRSEH</sequence>
<keyword id="KW-0539">Nucleus</keyword>
<keyword id="KW-1185">Reference proteome</keyword>
<keyword id="KW-0677">Repeat</keyword>
<keyword id="KW-0819">tRNA processing</keyword>
<keyword id="KW-0853">WD repeat</keyword>
<dbReference type="EMBL" id="CH408160">
    <property type="protein sequence ID" value="EDK40780.1"/>
    <property type="molecule type" value="Genomic_DNA"/>
</dbReference>
<dbReference type="RefSeq" id="XP_001482923.1">
    <property type="nucleotide sequence ID" value="XM_001482873.1"/>
</dbReference>
<dbReference type="SMR" id="A5DNM7"/>
<dbReference type="FunCoup" id="A5DNM7">
    <property type="interactions" value="283"/>
</dbReference>
<dbReference type="STRING" id="294746.A5DNM7"/>
<dbReference type="GeneID" id="5124856"/>
<dbReference type="KEGG" id="pgu:PGUG_04878"/>
<dbReference type="VEuPathDB" id="FungiDB:PGUG_04878"/>
<dbReference type="eggNOG" id="KOG3914">
    <property type="taxonomic scope" value="Eukaryota"/>
</dbReference>
<dbReference type="HOGENOM" id="CLU_022082_0_0_1"/>
<dbReference type="InParanoid" id="A5DNM7"/>
<dbReference type="OMA" id="VKHWLFG"/>
<dbReference type="OrthoDB" id="339900at2759"/>
<dbReference type="UniPathway" id="UPA00989"/>
<dbReference type="Proteomes" id="UP000001997">
    <property type="component" value="Unassembled WGS sequence"/>
</dbReference>
<dbReference type="GO" id="GO:0005829">
    <property type="term" value="C:cytosol"/>
    <property type="evidence" value="ECO:0007669"/>
    <property type="project" value="EnsemblFungi"/>
</dbReference>
<dbReference type="GO" id="GO:0005634">
    <property type="term" value="C:nucleus"/>
    <property type="evidence" value="ECO:0007669"/>
    <property type="project" value="UniProtKB-SubCell"/>
</dbReference>
<dbReference type="GO" id="GO:0106143">
    <property type="term" value="C:tRNA (m7G46) methyltransferase complex"/>
    <property type="evidence" value="ECO:0007669"/>
    <property type="project" value="EnsemblFungi"/>
</dbReference>
<dbReference type="GO" id="GO:0008047">
    <property type="term" value="F:enzyme activator activity"/>
    <property type="evidence" value="ECO:0007669"/>
    <property type="project" value="EnsemblFungi"/>
</dbReference>
<dbReference type="GO" id="GO:0106004">
    <property type="term" value="P:tRNA (guanine-N7)-methylation"/>
    <property type="evidence" value="ECO:0007669"/>
    <property type="project" value="UniProtKB-UniRule"/>
</dbReference>
<dbReference type="Gene3D" id="2.130.10.10">
    <property type="entry name" value="YVTN repeat-like/Quinoprotein amine dehydrogenase"/>
    <property type="match status" value="1"/>
</dbReference>
<dbReference type="HAMAP" id="MF_03056">
    <property type="entry name" value="TRM82"/>
    <property type="match status" value="1"/>
</dbReference>
<dbReference type="InterPro" id="IPR028884">
    <property type="entry name" value="Trm82"/>
</dbReference>
<dbReference type="InterPro" id="IPR015943">
    <property type="entry name" value="WD40/YVTN_repeat-like_dom_sf"/>
</dbReference>
<dbReference type="InterPro" id="IPR036322">
    <property type="entry name" value="WD40_repeat_dom_sf"/>
</dbReference>
<dbReference type="InterPro" id="IPR001680">
    <property type="entry name" value="WD40_rpt"/>
</dbReference>
<dbReference type="PANTHER" id="PTHR16288:SF0">
    <property type="entry name" value="TRNA (GUANINE-N(7)-)-METHYLTRANSFERASE NON-CATALYTIC SUBUNIT WDR4"/>
    <property type="match status" value="1"/>
</dbReference>
<dbReference type="PANTHER" id="PTHR16288">
    <property type="entry name" value="WD40 REPEAT PROTEIN 4"/>
    <property type="match status" value="1"/>
</dbReference>
<dbReference type="Pfam" id="PF00400">
    <property type="entry name" value="WD40"/>
    <property type="match status" value="1"/>
</dbReference>
<dbReference type="SMART" id="SM00320">
    <property type="entry name" value="WD40"/>
    <property type="match status" value="3"/>
</dbReference>
<dbReference type="SUPFAM" id="SSF50978">
    <property type="entry name" value="WD40 repeat-like"/>
    <property type="match status" value="1"/>
</dbReference>
<dbReference type="PROSITE" id="PS50294">
    <property type="entry name" value="WD_REPEATS_REGION"/>
    <property type="match status" value="1"/>
</dbReference>
<evidence type="ECO:0000255" key="1">
    <source>
        <dbReference type="HAMAP-Rule" id="MF_03056"/>
    </source>
</evidence>
<evidence type="ECO:0000256" key="2">
    <source>
        <dbReference type="SAM" id="MobiDB-lite"/>
    </source>
</evidence>
<accession>A5DNM7</accession>
<protein>
    <recommendedName>
        <fullName evidence="1">tRNA (guanine-N(7)-)-methyltransferase non-catalytic subunit TRM82</fullName>
    </recommendedName>
    <alternativeName>
        <fullName evidence="1">Transfer RNA methyltransferase 82</fullName>
    </alternativeName>
</protein>
<feature type="chain" id="PRO_0000370524" description="tRNA (guanine-N(7)-)-methyltransferase non-catalytic subunit TRM82">
    <location>
        <begin position="1"/>
        <end position="420"/>
    </location>
</feature>
<feature type="repeat" description="WD 1">
    <location>
        <begin position="87"/>
        <end position="127"/>
    </location>
</feature>
<feature type="repeat" description="WD 2">
    <location>
        <begin position="179"/>
        <end position="220"/>
    </location>
</feature>
<feature type="repeat" description="WD 3">
    <location>
        <begin position="224"/>
        <end position="266"/>
    </location>
</feature>
<feature type="repeat" description="WD 4">
    <location>
        <begin position="340"/>
        <end position="379"/>
    </location>
</feature>
<feature type="region of interest" description="Disordered" evidence="2">
    <location>
        <begin position="59"/>
        <end position="82"/>
    </location>
</feature>
<feature type="compositionally biased region" description="Basic and acidic residues" evidence="2">
    <location>
        <begin position="59"/>
        <end position="68"/>
    </location>
</feature>
<comment type="function">
    <text evidence="1">Required for the formation of N(7)-methylguanine at position 46 (m7G46) in tRNA. In the complex, it is required to stabilize and induce conformational changes of the catalytic subunit.</text>
</comment>
<comment type="pathway">
    <text evidence="1">tRNA modification; N(7)-methylguanine-tRNA biosynthesis.</text>
</comment>
<comment type="subunit">
    <text evidence="1">Forms a heterodimer with the catalytic subunit TRM8.</text>
</comment>
<comment type="subcellular location">
    <subcellularLocation>
        <location evidence="1">Nucleus</location>
    </subcellularLocation>
</comment>
<comment type="similarity">
    <text evidence="1">Belongs to the WD repeat TRM82 family.</text>
</comment>
<reference key="1">
    <citation type="journal article" date="2009" name="Nature">
        <title>Evolution of pathogenicity and sexual reproduction in eight Candida genomes.</title>
        <authorList>
            <person name="Butler G."/>
            <person name="Rasmussen M.D."/>
            <person name="Lin M.F."/>
            <person name="Santos M.A.S."/>
            <person name="Sakthikumar S."/>
            <person name="Munro C.A."/>
            <person name="Rheinbay E."/>
            <person name="Grabherr M."/>
            <person name="Forche A."/>
            <person name="Reedy J.L."/>
            <person name="Agrafioti I."/>
            <person name="Arnaud M.B."/>
            <person name="Bates S."/>
            <person name="Brown A.J.P."/>
            <person name="Brunke S."/>
            <person name="Costanzo M.C."/>
            <person name="Fitzpatrick D.A."/>
            <person name="de Groot P.W.J."/>
            <person name="Harris D."/>
            <person name="Hoyer L.L."/>
            <person name="Hube B."/>
            <person name="Klis F.M."/>
            <person name="Kodira C."/>
            <person name="Lennard N."/>
            <person name="Logue M.E."/>
            <person name="Martin R."/>
            <person name="Neiman A.M."/>
            <person name="Nikolaou E."/>
            <person name="Quail M.A."/>
            <person name="Quinn J."/>
            <person name="Santos M.C."/>
            <person name="Schmitzberger F.F."/>
            <person name="Sherlock G."/>
            <person name="Shah P."/>
            <person name="Silverstein K.A.T."/>
            <person name="Skrzypek M.S."/>
            <person name="Soll D."/>
            <person name="Staggs R."/>
            <person name="Stansfield I."/>
            <person name="Stumpf M.P.H."/>
            <person name="Sudbery P.E."/>
            <person name="Srikantha T."/>
            <person name="Zeng Q."/>
            <person name="Berman J."/>
            <person name="Berriman M."/>
            <person name="Heitman J."/>
            <person name="Gow N.A.R."/>
            <person name="Lorenz M.C."/>
            <person name="Birren B.W."/>
            <person name="Kellis M."/>
            <person name="Cuomo C.A."/>
        </authorList>
    </citation>
    <scope>NUCLEOTIDE SEQUENCE [LARGE SCALE GENOMIC DNA]</scope>
    <source>
        <strain>ATCC 6260 / CBS 566 / DSM 6381 / JCM 1539 / NBRC 10279 / NRRL Y-324</strain>
    </source>
</reference>
<proteinExistence type="inferred from homology"/>
<organism>
    <name type="scientific">Meyerozyma guilliermondii (strain ATCC 6260 / CBS 566 / DSM 6381 / JCM 1539 / NBRC 10279 / NRRL Y-324)</name>
    <name type="common">Yeast</name>
    <name type="synonym">Candida guilliermondii</name>
    <dbReference type="NCBI Taxonomy" id="294746"/>
    <lineage>
        <taxon>Eukaryota</taxon>
        <taxon>Fungi</taxon>
        <taxon>Dikarya</taxon>
        <taxon>Ascomycota</taxon>
        <taxon>Saccharomycotina</taxon>
        <taxon>Pichiomycetes</taxon>
        <taxon>Debaryomycetaceae</taxon>
        <taxon>Meyerozyma</taxon>
    </lineage>
</organism>